<dbReference type="EC" id="1.3.3.3" evidence="1"/>
<dbReference type="EMBL" id="CP000949">
    <property type="protein sequence ID" value="ACA70598.1"/>
    <property type="molecule type" value="Genomic_DNA"/>
</dbReference>
<dbReference type="SMR" id="B1J4A2"/>
<dbReference type="STRING" id="390235.PputW619_0092"/>
<dbReference type="KEGG" id="ppw:PputW619_0092"/>
<dbReference type="eggNOG" id="COG0408">
    <property type="taxonomic scope" value="Bacteria"/>
</dbReference>
<dbReference type="HOGENOM" id="CLU_026169_0_1_6"/>
<dbReference type="OrthoDB" id="9777553at2"/>
<dbReference type="UniPathway" id="UPA00251">
    <property type="reaction ID" value="UER00322"/>
</dbReference>
<dbReference type="GO" id="GO:0005737">
    <property type="term" value="C:cytoplasm"/>
    <property type="evidence" value="ECO:0007669"/>
    <property type="project" value="UniProtKB-SubCell"/>
</dbReference>
<dbReference type="GO" id="GO:0004109">
    <property type="term" value="F:coproporphyrinogen oxidase activity"/>
    <property type="evidence" value="ECO:0007669"/>
    <property type="project" value="UniProtKB-UniRule"/>
</dbReference>
<dbReference type="GO" id="GO:0046872">
    <property type="term" value="F:metal ion binding"/>
    <property type="evidence" value="ECO:0007669"/>
    <property type="project" value="UniProtKB-KW"/>
</dbReference>
<dbReference type="GO" id="GO:0042803">
    <property type="term" value="F:protein homodimerization activity"/>
    <property type="evidence" value="ECO:0000250"/>
    <property type="project" value="UniProtKB"/>
</dbReference>
<dbReference type="GO" id="GO:0006782">
    <property type="term" value="P:protoporphyrinogen IX biosynthetic process"/>
    <property type="evidence" value="ECO:0007669"/>
    <property type="project" value="UniProtKB-UniRule"/>
</dbReference>
<dbReference type="FunFam" id="3.40.1500.10:FF:000001">
    <property type="entry name" value="Oxygen-dependent coproporphyrinogen-III oxidase"/>
    <property type="match status" value="1"/>
</dbReference>
<dbReference type="Gene3D" id="3.40.1500.10">
    <property type="entry name" value="Coproporphyrinogen III oxidase, aerobic"/>
    <property type="match status" value="1"/>
</dbReference>
<dbReference type="HAMAP" id="MF_00333">
    <property type="entry name" value="Coprogen_oxidas"/>
    <property type="match status" value="1"/>
</dbReference>
<dbReference type="InterPro" id="IPR001260">
    <property type="entry name" value="Coprogen_oxidase_aer"/>
</dbReference>
<dbReference type="InterPro" id="IPR036406">
    <property type="entry name" value="Coprogen_oxidase_aer_sf"/>
</dbReference>
<dbReference type="InterPro" id="IPR018375">
    <property type="entry name" value="Coprogen_oxidase_CS"/>
</dbReference>
<dbReference type="NCBIfam" id="NF003727">
    <property type="entry name" value="PRK05330.1"/>
    <property type="match status" value="1"/>
</dbReference>
<dbReference type="PANTHER" id="PTHR10755">
    <property type="entry name" value="COPROPORPHYRINOGEN III OXIDASE, MITOCHONDRIAL"/>
    <property type="match status" value="1"/>
</dbReference>
<dbReference type="PANTHER" id="PTHR10755:SF0">
    <property type="entry name" value="OXYGEN-DEPENDENT COPROPORPHYRINOGEN-III OXIDASE, MITOCHONDRIAL"/>
    <property type="match status" value="1"/>
</dbReference>
<dbReference type="Pfam" id="PF01218">
    <property type="entry name" value="Coprogen_oxidas"/>
    <property type="match status" value="1"/>
</dbReference>
<dbReference type="PIRSF" id="PIRSF000166">
    <property type="entry name" value="Coproporphyri_ox"/>
    <property type="match status" value="1"/>
</dbReference>
<dbReference type="PRINTS" id="PR00073">
    <property type="entry name" value="COPRGNOXDASE"/>
</dbReference>
<dbReference type="SUPFAM" id="SSF102886">
    <property type="entry name" value="Coproporphyrinogen III oxidase"/>
    <property type="match status" value="1"/>
</dbReference>
<dbReference type="PROSITE" id="PS01021">
    <property type="entry name" value="COPROGEN_OXIDASE"/>
    <property type="match status" value="1"/>
</dbReference>
<reference key="1">
    <citation type="submission" date="2008-02" db="EMBL/GenBank/DDBJ databases">
        <title>Complete sequence of Pseudomonas putida W619.</title>
        <authorList>
            <person name="Copeland A."/>
            <person name="Lucas S."/>
            <person name="Lapidus A."/>
            <person name="Barry K."/>
            <person name="Detter J.C."/>
            <person name="Glavina del Rio T."/>
            <person name="Dalin E."/>
            <person name="Tice H."/>
            <person name="Pitluck S."/>
            <person name="Chain P."/>
            <person name="Malfatti S."/>
            <person name="Shin M."/>
            <person name="Vergez L."/>
            <person name="Schmutz J."/>
            <person name="Larimer F."/>
            <person name="Land M."/>
            <person name="Hauser L."/>
            <person name="Kyrpides N."/>
            <person name="Kim E."/>
            <person name="Taghavi S."/>
            <person name="Vangronsveld D."/>
            <person name="van der Lelie D."/>
            <person name="Richardson P."/>
        </authorList>
    </citation>
    <scope>NUCLEOTIDE SEQUENCE [LARGE SCALE GENOMIC DNA]</scope>
    <source>
        <strain>W619</strain>
    </source>
</reference>
<accession>B1J4A2</accession>
<name>HEM6_PSEPW</name>
<protein>
    <recommendedName>
        <fullName evidence="1">Oxygen-dependent coproporphyrinogen-III oxidase</fullName>
        <shortName evidence="1">CPO</shortName>
        <shortName evidence="1">Coprogen oxidase</shortName>
        <shortName evidence="1">Coproporphyrinogenase</shortName>
        <ecNumber evidence="1">1.3.3.3</ecNumber>
    </recommendedName>
</protein>
<gene>
    <name evidence="1" type="primary">hemF</name>
    <name type="ordered locus">PputW619_0092</name>
</gene>
<evidence type="ECO:0000255" key="1">
    <source>
        <dbReference type="HAMAP-Rule" id="MF_00333"/>
    </source>
</evidence>
<feature type="chain" id="PRO_1000119811" description="Oxygen-dependent coproporphyrinogen-III oxidase">
    <location>
        <begin position="1"/>
        <end position="303"/>
    </location>
</feature>
<feature type="region of interest" description="Important for dimerization" evidence="1">
    <location>
        <begin position="241"/>
        <end position="276"/>
    </location>
</feature>
<feature type="active site" description="Proton donor" evidence="1">
    <location>
        <position position="107"/>
    </location>
</feature>
<feature type="binding site" evidence="1">
    <location>
        <position position="93"/>
    </location>
    <ligand>
        <name>substrate</name>
    </ligand>
</feature>
<feature type="binding site" evidence="1">
    <location>
        <position position="97"/>
    </location>
    <ligand>
        <name>a divalent metal cation</name>
        <dbReference type="ChEBI" id="CHEBI:60240"/>
    </ligand>
</feature>
<feature type="binding site" evidence="1">
    <location>
        <position position="107"/>
    </location>
    <ligand>
        <name>a divalent metal cation</name>
        <dbReference type="ChEBI" id="CHEBI:60240"/>
    </ligand>
</feature>
<feature type="binding site" evidence="1">
    <location>
        <begin position="109"/>
        <end position="111"/>
    </location>
    <ligand>
        <name>substrate</name>
    </ligand>
</feature>
<feature type="binding site" evidence="1">
    <location>
        <position position="146"/>
    </location>
    <ligand>
        <name>a divalent metal cation</name>
        <dbReference type="ChEBI" id="CHEBI:60240"/>
    </ligand>
</feature>
<feature type="binding site" evidence="1">
    <location>
        <position position="176"/>
    </location>
    <ligand>
        <name>a divalent metal cation</name>
        <dbReference type="ChEBI" id="CHEBI:60240"/>
    </ligand>
</feature>
<feature type="binding site" evidence="1">
    <location>
        <begin position="259"/>
        <end position="261"/>
    </location>
    <ligand>
        <name>substrate</name>
    </ligand>
</feature>
<feature type="site" description="Important for dimerization" evidence="1">
    <location>
        <position position="176"/>
    </location>
</feature>
<organism>
    <name type="scientific">Pseudomonas putida (strain W619)</name>
    <dbReference type="NCBI Taxonomy" id="390235"/>
    <lineage>
        <taxon>Bacteria</taxon>
        <taxon>Pseudomonadati</taxon>
        <taxon>Pseudomonadota</taxon>
        <taxon>Gammaproteobacteria</taxon>
        <taxon>Pseudomonadales</taxon>
        <taxon>Pseudomonadaceae</taxon>
        <taxon>Pseudomonas</taxon>
    </lineage>
</organism>
<proteinExistence type="inferred from homology"/>
<keyword id="KW-0963">Cytoplasm</keyword>
<keyword id="KW-0350">Heme biosynthesis</keyword>
<keyword id="KW-0479">Metal-binding</keyword>
<keyword id="KW-0560">Oxidoreductase</keyword>
<keyword id="KW-0627">Porphyrin biosynthesis</keyword>
<sequence length="303" mass="34364">MTSRTEAVKAYLLDLQDRICSALETEDGGARFVEDAWVREAGGGGRTRVIGDGKLIEKGGVNFSHVFGSGLPPSASAHRPELAGRGFEALGVSLVIHPHNPHVPTSHANVRFFIAEKEGEEAVWWFGGGFDLTPYYGNEEDCIHWHRVAEQACAPFGADVYPRYKAWCDRYFHIKHRGEPRGIGGLFFDDLNEWGFDTCFAFIRAIGDAYVDAYLPIVQRRKDTPYTAEQREFQEYRRGRYVEFNLVYDRGTLFGLQSGGRTESILMSLPPQVRWGYDWKAAPGSEEARLTEYFLQDRDWLAH</sequence>
<comment type="function">
    <text evidence="1">Involved in the heme biosynthesis. Catalyzes the aerobic oxidative decarboxylation of propionate groups of rings A and B of coproporphyrinogen-III to yield the vinyl groups in protoporphyrinogen-IX.</text>
</comment>
<comment type="catalytic activity">
    <reaction evidence="1">
        <text>coproporphyrinogen III + O2 + 2 H(+) = protoporphyrinogen IX + 2 CO2 + 2 H2O</text>
        <dbReference type="Rhea" id="RHEA:18257"/>
        <dbReference type="ChEBI" id="CHEBI:15377"/>
        <dbReference type="ChEBI" id="CHEBI:15378"/>
        <dbReference type="ChEBI" id="CHEBI:15379"/>
        <dbReference type="ChEBI" id="CHEBI:16526"/>
        <dbReference type="ChEBI" id="CHEBI:57307"/>
        <dbReference type="ChEBI" id="CHEBI:57309"/>
        <dbReference type="EC" id="1.3.3.3"/>
    </reaction>
</comment>
<comment type="cofactor">
    <cofactor evidence="1">
        <name>a divalent metal cation</name>
        <dbReference type="ChEBI" id="CHEBI:60240"/>
    </cofactor>
</comment>
<comment type="pathway">
    <text evidence="1">Porphyrin-containing compound metabolism; protoporphyrin-IX biosynthesis; protoporphyrinogen-IX from coproporphyrinogen-III (O2 route): step 1/1.</text>
</comment>
<comment type="subunit">
    <text evidence="1">Homodimer.</text>
</comment>
<comment type="subcellular location">
    <subcellularLocation>
        <location evidence="1">Cytoplasm</location>
    </subcellularLocation>
</comment>
<comment type="similarity">
    <text evidence="1">Belongs to the aerobic coproporphyrinogen-III oxidase family.</text>
</comment>